<sequence>MKEYALEIATKAKAVLPKLSSLNPAVKNSILIRVSQLLKENKELIQKENEKDIEFAKSINLSKAMIDRLKVGEKQINGMIKILEDVAKLKDPVGEITSMWTVDNGLKIGRMRVPLGVIFIIYESRPNVTIEAASLCFKSSNAVILRGGKEAIHTNKILSDLFRQAIREHVEGLEDAVCFVDKREREIVTELLQLEGLVDVAIPRGGESLIKAVSETAKISVIKHYKGVCSIYVDNEADLKKAYNIVYNAKVQRPSVCNAIENLVIHKDLLQDFWPKMAMVLLESDVELRCDEDSYEILQNKDFDSFKSKIKKATEKDYYEEFLDLILAVKTVNSLEEAMQFIEKYGSKHSDAIITENHTKAMRFLQEVDSAAVYVNASTRFTDGNEFGLGAEMGISTDKIHARGPMALRELTIEKFIIFGNGQLRENVGIPKELKEKLQID</sequence>
<accession>B4U8A0</accession>
<feature type="chain" id="PRO_1000193616" description="Gamma-glutamyl phosphate reductase">
    <location>
        <begin position="1"/>
        <end position="441"/>
    </location>
</feature>
<comment type="function">
    <text evidence="1">Catalyzes the NADPH-dependent reduction of L-glutamate 5-phosphate into L-glutamate 5-semialdehyde and phosphate. The product spontaneously undergoes cyclization to form 1-pyrroline-5-carboxylate.</text>
</comment>
<comment type="catalytic activity">
    <reaction evidence="1">
        <text>L-glutamate 5-semialdehyde + phosphate + NADP(+) = L-glutamyl 5-phosphate + NADPH + H(+)</text>
        <dbReference type="Rhea" id="RHEA:19541"/>
        <dbReference type="ChEBI" id="CHEBI:15378"/>
        <dbReference type="ChEBI" id="CHEBI:43474"/>
        <dbReference type="ChEBI" id="CHEBI:57783"/>
        <dbReference type="ChEBI" id="CHEBI:58066"/>
        <dbReference type="ChEBI" id="CHEBI:58274"/>
        <dbReference type="ChEBI" id="CHEBI:58349"/>
        <dbReference type="EC" id="1.2.1.41"/>
    </reaction>
</comment>
<comment type="pathway">
    <text evidence="1">Amino-acid biosynthesis; L-proline biosynthesis; L-glutamate 5-semialdehyde from L-glutamate: step 2/2.</text>
</comment>
<comment type="subcellular location">
    <subcellularLocation>
        <location evidence="1">Cytoplasm</location>
    </subcellularLocation>
</comment>
<comment type="similarity">
    <text evidence="1">Belongs to the gamma-glutamyl phosphate reductase family.</text>
</comment>
<reference key="1">
    <citation type="journal article" date="2009" name="J. Bacteriol.">
        <title>Complete and draft genome sequences of six members of the Aquificales.</title>
        <authorList>
            <person name="Reysenbach A.-L."/>
            <person name="Hamamura N."/>
            <person name="Podar M."/>
            <person name="Griffiths E."/>
            <person name="Ferreira S."/>
            <person name="Hochstein R."/>
            <person name="Heidelberg J."/>
            <person name="Johnson J."/>
            <person name="Mead D."/>
            <person name="Pohorille A."/>
            <person name="Sarmiento M."/>
            <person name="Schweighofer K."/>
            <person name="Seshadri R."/>
            <person name="Voytek M.A."/>
        </authorList>
    </citation>
    <scope>NUCLEOTIDE SEQUENCE [LARGE SCALE GENOMIC DNA]</scope>
    <source>
        <strain>Y04AAS1</strain>
    </source>
</reference>
<keyword id="KW-0028">Amino-acid biosynthesis</keyword>
<keyword id="KW-0963">Cytoplasm</keyword>
<keyword id="KW-0521">NADP</keyword>
<keyword id="KW-0560">Oxidoreductase</keyword>
<keyword id="KW-0641">Proline biosynthesis</keyword>
<proteinExistence type="inferred from homology"/>
<gene>
    <name evidence="1" type="primary">proA</name>
    <name type="ordered locus">HY04AAS1_0674</name>
</gene>
<name>PROA_HYDS0</name>
<dbReference type="EC" id="1.2.1.41" evidence="1"/>
<dbReference type="EMBL" id="CP001130">
    <property type="protein sequence ID" value="ACG57361.1"/>
    <property type="molecule type" value="Genomic_DNA"/>
</dbReference>
<dbReference type="RefSeq" id="WP_012513717.1">
    <property type="nucleotide sequence ID" value="NC_011126.1"/>
</dbReference>
<dbReference type="SMR" id="B4U8A0"/>
<dbReference type="STRING" id="380749.HY04AAS1_0674"/>
<dbReference type="KEGG" id="hya:HY04AAS1_0674"/>
<dbReference type="eggNOG" id="COG0014">
    <property type="taxonomic scope" value="Bacteria"/>
</dbReference>
<dbReference type="HOGENOM" id="CLU_030231_0_0_0"/>
<dbReference type="OrthoDB" id="9809970at2"/>
<dbReference type="UniPathway" id="UPA00098">
    <property type="reaction ID" value="UER00360"/>
</dbReference>
<dbReference type="GO" id="GO:0005737">
    <property type="term" value="C:cytoplasm"/>
    <property type="evidence" value="ECO:0007669"/>
    <property type="project" value="UniProtKB-SubCell"/>
</dbReference>
<dbReference type="GO" id="GO:0004350">
    <property type="term" value="F:glutamate-5-semialdehyde dehydrogenase activity"/>
    <property type="evidence" value="ECO:0007669"/>
    <property type="project" value="UniProtKB-UniRule"/>
</dbReference>
<dbReference type="GO" id="GO:0050661">
    <property type="term" value="F:NADP binding"/>
    <property type="evidence" value="ECO:0007669"/>
    <property type="project" value="InterPro"/>
</dbReference>
<dbReference type="GO" id="GO:0055129">
    <property type="term" value="P:L-proline biosynthetic process"/>
    <property type="evidence" value="ECO:0007669"/>
    <property type="project" value="UniProtKB-UniRule"/>
</dbReference>
<dbReference type="CDD" id="cd07079">
    <property type="entry name" value="ALDH_F18-19_ProA-GPR"/>
    <property type="match status" value="1"/>
</dbReference>
<dbReference type="FunFam" id="3.40.309.10:FF:000006">
    <property type="entry name" value="Gamma-glutamyl phosphate reductase"/>
    <property type="match status" value="1"/>
</dbReference>
<dbReference type="Gene3D" id="3.40.605.10">
    <property type="entry name" value="Aldehyde Dehydrogenase, Chain A, domain 1"/>
    <property type="match status" value="1"/>
</dbReference>
<dbReference type="Gene3D" id="3.40.309.10">
    <property type="entry name" value="Aldehyde Dehydrogenase, Chain A, domain 2"/>
    <property type="match status" value="1"/>
</dbReference>
<dbReference type="HAMAP" id="MF_00412">
    <property type="entry name" value="ProA"/>
    <property type="match status" value="1"/>
</dbReference>
<dbReference type="InterPro" id="IPR016161">
    <property type="entry name" value="Ald_DH/histidinol_DH"/>
</dbReference>
<dbReference type="InterPro" id="IPR016163">
    <property type="entry name" value="Ald_DH_C"/>
</dbReference>
<dbReference type="InterPro" id="IPR016162">
    <property type="entry name" value="Ald_DH_N"/>
</dbReference>
<dbReference type="InterPro" id="IPR015590">
    <property type="entry name" value="Aldehyde_DH_dom"/>
</dbReference>
<dbReference type="InterPro" id="IPR020593">
    <property type="entry name" value="G-glutamylP_reductase_CS"/>
</dbReference>
<dbReference type="InterPro" id="IPR012134">
    <property type="entry name" value="Glu-5-SA_DH"/>
</dbReference>
<dbReference type="InterPro" id="IPR000965">
    <property type="entry name" value="GPR_dom"/>
</dbReference>
<dbReference type="NCBIfam" id="NF001221">
    <property type="entry name" value="PRK00197.1"/>
    <property type="match status" value="1"/>
</dbReference>
<dbReference type="NCBIfam" id="TIGR00407">
    <property type="entry name" value="proA"/>
    <property type="match status" value="1"/>
</dbReference>
<dbReference type="PANTHER" id="PTHR11063:SF8">
    <property type="entry name" value="DELTA-1-PYRROLINE-5-CARBOXYLATE SYNTHASE"/>
    <property type="match status" value="1"/>
</dbReference>
<dbReference type="PANTHER" id="PTHR11063">
    <property type="entry name" value="GLUTAMATE SEMIALDEHYDE DEHYDROGENASE"/>
    <property type="match status" value="1"/>
</dbReference>
<dbReference type="Pfam" id="PF00171">
    <property type="entry name" value="Aldedh"/>
    <property type="match status" value="1"/>
</dbReference>
<dbReference type="PIRSF" id="PIRSF000151">
    <property type="entry name" value="GPR"/>
    <property type="match status" value="1"/>
</dbReference>
<dbReference type="SUPFAM" id="SSF53720">
    <property type="entry name" value="ALDH-like"/>
    <property type="match status" value="1"/>
</dbReference>
<dbReference type="PROSITE" id="PS01223">
    <property type="entry name" value="PROA"/>
    <property type="match status" value="1"/>
</dbReference>
<protein>
    <recommendedName>
        <fullName evidence="1">Gamma-glutamyl phosphate reductase</fullName>
        <shortName evidence="1">GPR</shortName>
        <ecNumber evidence="1">1.2.1.41</ecNumber>
    </recommendedName>
    <alternativeName>
        <fullName evidence="1">Glutamate-5-semialdehyde dehydrogenase</fullName>
    </alternativeName>
    <alternativeName>
        <fullName evidence="1">Glutamyl-gamma-semialdehyde dehydrogenase</fullName>
        <shortName evidence="1">GSA dehydrogenase</shortName>
    </alternativeName>
</protein>
<evidence type="ECO:0000255" key="1">
    <source>
        <dbReference type="HAMAP-Rule" id="MF_00412"/>
    </source>
</evidence>
<organism>
    <name type="scientific">Hydrogenobaculum sp. (strain Y04AAS1)</name>
    <dbReference type="NCBI Taxonomy" id="380749"/>
    <lineage>
        <taxon>Bacteria</taxon>
        <taxon>Pseudomonadati</taxon>
        <taxon>Aquificota</taxon>
        <taxon>Aquificia</taxon>
        <taxon>Aquificales</taxon>
        <taxon>Aquificaceae</taxon>
        <taxon>Hydrogenobaculum</taxon>
    </lineage>
</organism>